<accession>Q2TBP4</accession>
<sequence>MTAHCPEDPSLERHFKGHRDAVTSVDFSLNTKQLASGSMDSCLMVWHMKPQTRAYRFAGHKDAVTCVNFSPSGHLLASGSRDKTVRIWVPNVKGESTVFRAHTATVRSVHFCSDGQSFVTASDDKTVKVWSTHRQKFLFSLSQHINWVRCAKFSPDGRLIVSASDDKTVKLWDKTSRECVHSYCEHGGFVTYVDFHPSGTCIAAAGMDNTVKVWDVRTHRLLQHYQLHSAAVNALSFHPSGNYLVTASSDSTLKILDLMEGRLLYTLHGHQGPATTVAFSRTGEYFASGGSDEQVMVWKSNFDIVDYGEVLRVQRPPATRASSSGTLPEVDPLVPPGRGRSQESMQSHSQEPVSVPQSLTSTLEHIVGQLDVLTQTVSILEQRLTLTEDKLKQCLENQQLIMQRTTP</sequence>
<keyword id="KW-0966">Cell projection</keyword>
<keyword id="KW-0970">Cilium biogenesis/degradation</keyword>
<keyword id="KW-0175">Coiled coil</keyword>
<keyword id="KW-0963">Cytoplasm</keyword>
<keyword id="KW-0206">Cytoskeleton</keyword>
<keyword id="KW-1185">Reference proteome</keyword>
<keyword id="KW-0677">Repeat</keyword>
<keyword id="KW-0853">WD repeat</keyword>
<proteinExistence type="evidence at transcript level"/>
<dbReference type="EMBL" id="BC109862">
    <property type="protein sequence ID" value="AAI09863.1"/>
    <property type="molecule type" value="mRNA"/>
</dbReference>
<dbReference type="RefSeq" id="NP_001033649.1">
    <property type="nucleotide sequence ID" value="NM_001038560.2"/>
</dbReference>
<dbReference type="SMR" id="Q2TBP4"/>
<dbReference type="FunCoup" id="Q2TBP4">
    <property type="interactions" value="550"/>
</dbReference>
<dbReference type="STRING" id="9913.ENSBTAP00000072657"/>
<dbReference type="PaxDb" id="9913-ENSBTAP00000001927"/>
<dbReference type="GeneID" id="534489"/>
<dbReference type="KEGG" id="bta:534489"/>
<dbReference type="CTD" id="25886"/>
<dbReference type="eggNOG" id="ENOG502QSVJ">
    <property type="taxonomic scope" value="Eukaryota"/>
</dbReference>
<dbReference type="HOGENOM" id="CLU_000288_57_17_1"/>
<dbReference type="InParanoid" id="Q2TBP4"/>
<dbReference type="OrthoDB" id="10264588at2759"/>
<dbReference type="TreeFam" id="TF324210"/>
<dbReference type="Proteomes" id="UP000009136">
    <property type="component" value="Unplaced"/>
</dbReference>
<dbReference type="GO" id="GO:0005814">
    <property type="term" value="C:centriole"/>
    <property type="evidence" value="ECO:0000250"/>
    <property type="project" value="UniProtKB"/>
</dbReference>
<dbReference type="GO" id="GO:0036064">
    <property type="term" value="C:ciliary basal body"/>
    <property type="evidence" value="ECO:0000250"/>
    <property type="project" value="UniProtKB"/>
</dbReference>
<dbReference type="GO" id="GO:0005737">
    <property type="term" value="C:cytoplasm"/>
    <property type="evidence" value="ECO:0007669"/>
    <property type="project" value="UniProtKB-KW"/>
</dbReference>
<dbReference type="GO" id="GO:0000922">
    <property type="term" value="C:spindle pole"/>
    <property type="evidence" value="ECO:0000250"/>
    <property type="project" value="UniProtKB"/>
</dbReference>
<dbReference type="GO" id="GO:0060271">
    <property type="term" value="P:cilium assembly"/>
    <property type="evidence" value="ECO:0000318"/>
    <property type="project" value="GO_Central"/>
</dbReference>
<dbReference type="CDD" id="cd00200">
    <property type="entry name" value="WD40"/>
    <property type="match status" value="1"/>
</dbReference>
<dbReference type="FunFam" id="2.130.10.10:FF:000527">
    <property type="entry name" value="POC1 centriolar protein homolog A"/>
    <property type="match status" value="1"/>
</dbReference>
<dbReference type="FunFam" id="2.130.10.10:FF:000699">
    <property type="entry name" value="POC1 centriolar protein homolog A"/>
    <property type="match status" value="1"/>
</dbReference>
<dbReference type="FunFam" id="2.130.10.10:FF:000877">
    <property type="entry name" value="POC1 centriolar protein homolog A"/>
    <property type="match status" value="1"/>
</dbReference>
<dbReference type="Gene3D" id="2.130.10.10">
    <property type="entry name" value="YVTN repeat-like/Quinoprotein amine dehydrogenase"/>
    <property type="match status" value="3"/>
</dbReference>
<dbReference type="InterPro" id="IPR020472">
    <property type="entry name" value="G-protein_beta_WD-40_rep"/>
</dbReference>
<dbReference type="InterPro" id="IPR015943">
    <property type="entry name" value="WD40/YVTN_repeat-like_dom_sf"/>
</dbReference>
<dbReference type="InterPro" id="IPR019775">
    <property type="entry name" value="WD40_repeat_CS"/>
</dbReference>
<dbReference type="InterPro" id="IPR036322">
    <property type="entry name" value="WD40_repeat_dom_sf"/>
</dbReference>
<dbReference type="InterPro" id="IPR001680">
    <property type="entry name" value="WD40_rpt"/>
</dbReference>
<dbReference type="InterPro" id="IPR050505">
    <property type="entry name" value="WDR55_POC1"/>
</dbReference>
<dbReference type="PANTHER" id="PTHR44019:SF2">
    <property type="entry name" value="POC1 CENTRIOLAR PROTEIN HOMOLOG A"/>
    <property type="match status" value="1"/>
</dbReference>
<dbReference type="PANTHER" id="PTHR44019">
    <property type="entry name" value="WD REPEAT-CONTAINING PROTEIN 55"/>
    <property type="match status" value="1"/>
</dbReference>
<dbReference type="Pfam" id="PF00400">
    <property type="entry name" value="WD40"/>
    <property type="match status" value="7"/>
</dbReference>
<dbReference type="PRINTS" id="PR00320">
    <property type="entry name" value="GPROTEINBRPT"/>
</dbReference>
<dbReference type="SMART" id="SM00320">
    <property type="entry name" value="WD40"/>
    <property type="match status" value="7"/>
</dbReference>
<dbReference type="SUPFAM" id="SSF50978">
    <property type="entry name" value="WD40 repeat-like"/>
    <property type="match status" value="1"/>
</dbReference>
<dbReference type="PROSITE" id="PS00678">
    <property type="entry name" value="WD_REPEATS_1"/>
    <property type="match status" value="1"/>
</dbReference>
<dbReference type="PROSITE" id="PS50082">
    <property type="entry name" value="WD_REPEATS_2"/>
    <property type="match status" value="7"/>
</dbReference>
<dbReference type="PROSITE" id="PS50294">
    <property type="entry name" value="WD_REPEATS_REGION"/>
    <property type="match status" value="1"/>
</dbReference>
<name>POC1A_BOVIN</name>
<gene>
    <name type="primary">POC1A</name>
    <name type="synonym">WDR51A</name>
</gene>
<reference key="1">
    <citation type="submission" date="2005-08" db="EMBL/GenBank/DDBJ databases">
        <authorList>
            <consortium name="NIH - Mammalian Gene Collection (MGC) project"/>
        </authorList>
    </citation>
    <scope>NUCLEOTIDE SEQUENCE [LARGE SCALE MRNA]</scope>
    <source>
        <strain>Crossbred X Angus</strain>
        <tissue>Liver</tissue>
    </source>
</reference>
<protein>
    <recommendedName>
        <fullName>POC1 centriolar protein homolog A</fullName>
    </recommendedName>
    <alternativeName>
        <fullName>WD repeat-containing protein 51A</fullName>
    </alternativeName>
</protein>
<evidence type="ECO:0000250" key="1"/>
<evidence type="ECO:0000255" key="2"/>
<evidence type="ECO:0000256" key="3">
    <source>
        <dbReference type="SAM" id="MobiDB-lite"/>
    </source>
</evidence>
<evidence type="ECO:0000305" key="4"/>
<organism>
    <name type="scientific">Bos taurus</name>
    <name type="common">Bovine</name>
    <dbReference type="NCBI Taxonomy" id="9913"/>
    <lineage>
        <taxon>Eukaryota</taxon>
        <taxon>Metazoa</taxon>
        <taxon>Chordata</taxon>
        <taxon>Craniata</taxon>
        <taxon>Vertebrata</taxon>
        <taxon>Euteleostomi</taxon>
        <taxon>Mammalia</taxon>
        <taxon>Eutheria</taxon>
        <taxon>Laurasiatheria</taxon>
        <taxon>Artiodactyla</taxon>
        <taxon>Ruminantia</taxon>
        <taxon>Pecora</taxon>
        <taxon>Bovidae</taxon>
        <taxon>Bovinae</taxon>
        <taxon>Bos</taxon>
    </lineage>
</organism>
<comment type="function">
    <text evidence="1">Plays an important role in centriole assembly and/or stability and ciliogenesis. Involved in early steps of centriole duplication, as well as in the later steps of centriole length control. Acts in concert with POC1B to ensure centriole integrity and proper mitotic spindle formation (By similarity).</text>
</comment>
<comment type="subunit">
    <text evidence="1">Interacts with POC1B.</text>
</comment>
<comment type="subcellular location">
    <subcellularLocation>
        <location evidence="1">Cytoplasm</location>
        <location evidence="1">Cytoskeleton</location>
        <location evidence="1">Microtubule organizing center</location>
        <location evidence="1">Centrosome</location>
        <location evidence="1">Centriole</location>
    </subcellularLocation>
    <subcellularLocation>
        <location evidence="1">Cytoplasm</location>
        <location evidence="1">Cytoskeleton</location>
        <location evidence="1">Cilium basal body</location>
    </subcellularLocation>
    <subcellularLocation>
        <location evidence="1">Cytoplasm</location>
        <location evidence="1">Cytoskeleton</location>
        <location evidence="1">Spindle pole</location>
    </subcellularLocation>
    <text evidence="1">Component of both mother and daughter centrioles.</text>
</comment>
<comment type="similarity">
    <text evidence="4">Belongs to the WD repeat POC1 family.</text>
</comment>
<feature type="chain" id="PRO_0000231521" description="POC1 centriolar protein homolog A">
    <location>
        <begin position="1"/>
        <end position="407"/>
    </location>
</feature>
<feature type="repeat" description="WD 1">
    <location>
        <begin position="17"/>
        <end position="56"/>
    </location>
</feature>
<feature type="repeat" description="WD 2">
    <location>
        <begin position="59"/>
        <end position="98"/>
    </location>
</feature>
<feature type="repeat" description="WD 3">
    <location>
        <begin position="101"/>
        <end position="140"/>
    </location>
</feature>
<feature type="repeat" description="WD 4">
    <location>
        <begin position="143"/>
        <end position="182"/>
    </location>
</feature>
<feature type="repeat" description="WD 5">
    <location>
        <begin position="185"/>
        <end position="224"/>
    </location>
</feature>
<feature type="repeat" description="WD 6">
    <location>
        <begin position="227"/>
        <end position="266"/>
    </location>
</feature>
<feature type="repeat" description="WD 7">
    <location>
        <begin position="269"/>
        <end position="308"/>
    </location>
</feature>
<feature type="region of interest" description="Disordered" evidence="3">
    <location>
        <begin position="317"/>
        <end position="357"/>
    </location>
</feature>
<feature type="coiled-coil region" evidence="2">
    <location>
        <begin position="369"/>
        <end position="397"/>
    </location>
</feature>
<feature type="compositionally biased region" description="Polar residues" evidence="3">
    <location>
        <begin position="342"/>
        <end position="357"/>
    </location>
</feature>